<comment type="catalytic activity">
    <reaction evidence="2">
        <text>an aldehyde + NAD(+) + H2O = a carboxylate + NADH + 2 H(+)</text>
        <dbReference type="Rhea" id="RHEA:16185"/>
        <dbReference type="ChEBI" id="CHEBI:15377"/>
        <dbReference type="ChEBI" id="CHEBI:15378"/>
        <dbReference type="ChEBI" id="CHEBI:17478"/>
        <dbReference type="ChEBI" id="CHEBI:29067"/>
        <dbReference type="ChEBI" id="CHEBI:57540"/>
        <dbReference type="ChEBI" id="CHEBI:57945"/>
        <dbReference type="EC" id="1.2.1.3"/>
    </reaction>
</comment>
<comment type="similarity">
    <text evidence="2">Belongs to the aldehyde dehydrogenase family.</text>
</comment>
<keyword id="KW-0520">NAD</keyword>
<keyword id="KW-0560">Oxidoreductase</keyword>
<gene>
    <name type="ordered locus">SACOL2114</name>
</gene>
<proteinExistence type="inferred from homology"/>
<organism>
    <name type="scientific">Staphylococcus aureus (strain COL)</name>
    <dbReference type="NCBI Taxonomy" id="93062"/>
    <lineage>
        <taxon>Bacteria</taxon>
        <taxon>Bacillati</taxon>
        <taxon>Bacillota</taxon>
        <taxon>Bacilli</taxon>
        <taxon>Bacillales</taxon>
        <taxon>Staphylococcaceae</taxon>
        <taxon>Staphylococcus</taxon>
    </lineage>
</organism>
<reference key="1">
    <citation type="journal article" date="2005" name="J. Bacteriol.">
        <title>Insights on evolution of virulence and resistance from the complete genome analysis of an early methicillin-resistant Staphylococcus aureus strain and a biofilm-producing methicillin-resistant Staphylococcus epidermidis strain.</title>
        <authorList>
            <person name="Gill S.R."/>
            <person name="Fouts D.E."/>
            <person name="Archer G.L."/>
            <person name="Mongodin E.F."/>
            <person name="DeBoy R.T."/>
            <person name="Ravel J."/>
            <person name="Paulsen I.T."/>
            <person name="Kolonay J.F."/>
            <person name="Brinkac L.M."/>
            <person name="Beanan M.J."/>
            <person name="Dodson R.J."/>
            <person name="Daugherty S.C."/>
            <person name="Madupu R."/>
            <person name="Angiuoli S.V."/>
            <person name="Durkin A.S."/>
            <person name="Haft D.H."/>
            <person name="Vamathevan J.J."/>
            <person name="Khouri H."/>
            <person name="Utterback T.R."/>
            <person name="Lee C."/>
            <person name="Dimitrov G."/>
            <person name="Jiang L."/>
            <person name="Qin H."/>
            <person name="Weidman J."/>
            <person name="Tran K."/>
            <person name="Kang K.H."/>
            <person name="Hance I.R."/>
            <person name="Nelson K.E."/>
            <person name="Fraser C.M."/>
        </authorList>
    </citation>
    <scope>NUCLEOTIDE SEQUENCE [LARGE SCALE GENOMIC DNA]</scope>
    <source>
        <strain>COL</strain>
    </source>
</reference>
<accession>Q5HE78</accession>
<sequence>MRDYTKQYINGEWVESNSNETIEVINPATEEVIGKVAKGNKADVDKAVEAADDVYLEFRHTSVKERQALLDKIVKEYENRKDDIVQAITDELGAPLSLSERVHYQMGLNHFVAARDALDNYEFEERRGDDLVVKEAIGVSGLITPWNFPTNQTSLKLAAAFAAGSPVVLKPSEETPFAAVILAEIFDKVGVPKGVFNLVNGDGAGVGNPLSEHPKVRMMSFTGSGPTGSKIMEKAAKDFKKVSLELGGKSPYIVLDDVDIKEAAKATTGKVVNNTGQVCTAGTRVLVPNKIKDAFLAELKEQFSQVRVGNPREDGTQVGPIISKKQFDQVQNYINKGIEEGAELFYGGPGKPEGLEKGYFARPTIFINVDNQMTIAQEEIFGPVMSVITYNDLDEAIQIANDTKYGLAGYVIGKDKETLHKVARSIEAGTVEINEAGRKPDLPFGGYKQSGLGREWGDYGIEEFLEVKSIAGYFK</sequence>
<protein>
    <recommendedName>
        <fullName evidence="2">Putative aldehyde dehydrogenase</fullName>
        <ecNumber evidence="2">1.2.1.3</ecNumber>
    </recommendedName>
</protein>
<feature type="chain" id="PRO_0000293553" description="Putative aldehyde dehydrogenase">
    <location>
        <begin position="1"/>
        <end position="475"/>
    </location>
</feature>
<feature type="active site" description="Proton acceptor" evidence="1">
    <location>
        <position position="245"/>
    </location>
</feature>
<feature type="active site" description="Nucleophile" evidence="1">
    <location>
        <position position="279"/>
    </location>
</feature>
<feature type="binding site" evidence="1">
    <location>
        <begin position="146"/>
        <end position="147"/>
    </location>
    <ligand>
        <name>NAD(+)</name>
        <dbReference type="ChEBI" id="CHEBI:57540"/>
    </ligand>
</feature>
<feature type="binding site" evidence="1">
    <location>
        <begin position="223"/>
        <end position="224"/>
    </location>
    <ligand>
        <name>NAD(+)</name>
        <dbReference type="ChEBI" id="CHEBI:57540"/>
    </ligand>
</feature>
<feature type="binding site" evidence="1">
    <location>
        <position position="246"/>
    </location>
    <ligand>
        <name>NAD(+)</name>
        <dbReference type="ChEBI" id="CHEBI:57540"/>
    </ligand>
</feature>
<feature type="binding site" evidence="1">
    <location>
        <position position="379"/>
    </location>
    <ligand>
        <name>NAD(+)</name>
        <dbReference type="ChEBI" id="CHEBI:57540"/>
    </ligand>
</feature>
<dbReference type="EC" id="1.2.1.3" evidence="2"/>
<dbReference type="EMBL" id="CP000046">
    <property type="protein sequence ID" value="AAW38424.1"/>
    <property type="molecule type" value="Genomic_DNA"/>
</dbReference>
<dbReference type="RefSeq" id="WP_001206093.1">
    <property type="nucleotide sequence ID" value="NZ_JBGOFO010000007.1"/>
</dbReference>
<dbReference type="SMR" id="Q5HE78"/>
<dbReference type="KEGG" id="sac:SACOL2114"/>
<dbReference type="HOGENOM" id="CLU_005391_0_2_9"/>
<dbReference type="Proteomes" id="UP000000530">
    <property type="component" value="Chromosome"/>
</dbReference>
<dbReference type="GO" id="GO:0004029">
    <property type="term" value="F:aldehyde dehydrogenase (NAD+) activity"/>
    <property type="evidence" value="ECO:0007669"/>
    <property type="project" value="UniProtKB-EC"/>
</dbReference>
<dbReference type="GO" id="GO:0006081">
    <property type="term" value="P:aldehyde metabolic process"/>
    <property type="evidence" value="ECO:0007669"/>
    <property type="project" value="InterPro"/>
</dbReference>
<dbReference type="CDD" id="cd07138">
    <property type="entry name" value="ALDH_CddD_SSP0762"/>
    <property type="match status" value="1"/>
</dbReference>
<dbReference type="FunFam" id="3.40.605.10:FF:000026">
    <property type="entry name" value="Aldehyde dehydrogenase, putative"/>
    <property type="match status" value="1"/>
</dbReference>
<dbReference type="FunFam" id="3.40.309.10:FF:000012">
    <property type="entry name" value="Betaine aldehyde dehydrogenase"/>
    <property type="match status" value="1"/>
</dbReference>
<dbReference type="FunFam" id="3.40.605.10:FF:000007">
    <property type="entry name" value="NAD/NADP-dependent betaine aldehyde dehydrogenase"/>
    <property type="match status" value="1"/>
</dbReference>
<dbReference type="Gene3D" id="3.40.605.10">
    <property type="entry name" value="Aldehyde Dehydrogenase, Chain A, domain 1"/>
    <property type="match status" value="1"/>
</dbReference>
<dbReference type="Gene3D" id="3.40.309.10">
    <property type="entry name" value="Aldehyde Dehydrogenase, Chain A, domain 2"/>
    <property type="match status" value="1"/>
</dbReference>
<dbReference type="InterPro" id="IPR016161">
    <property type="entry name" value="Ald_DH/histidinol_DH"/>
</dbReference>
<dbReference type="InterPro" id="IPR016163">
    <property type="entry name" value="Ald_DH_C"/>
</dbReference>
<dbReference type="InterPro" id="IPR016160">
    <property type="entry name" value="Ald_DH_CS_CYS"/>
</dbReference>
<dbReference type="InterPro" id="IPR029510">
    <property type="entry name" value="Ald_DH_CS_GLU"/>
</dbReference>
<dbReference type="InterPro" id="IPR016162">
    <property type="entry name" value="Ald_DH_N"/>
</dbReference>
<dbReference type="InterPro" id="IPR015590">
    <property type="entry name" value="Aldehyde_DH_dom"/>
</dbReference>
<dbReference type="InterPro" id="IPR012394">
    <property type="entry name" value="Aldehyde_DH_NAD(P)"/>
</dbReference>
<dbReference type="PANTHER" id="PTHR42804">
    <property type="entry name" value="ALDEHYDE DEHYDROGENASE"/>
    <property type="match status" value="1"/>
</dbReference>
<dbReference type="PANTHER" id="PTHR42804:SF1">
    <property type="entry name" value="ALDEHYDE DEHYDROGENASE-RELATED"/>
    <property type="match status" value="1"/>
</dbReference>
<dbReference type="Pfam" id="PF00171">
    <property type="entry name" value="Aldedh"/>
    <property type="match status" value="1"/>
</dbReference>
<dbReference type="PIRSF" id="PIRSF036492">
    <property type="entry name" value="ALDH"/>
    <property type="match status" value="1"/>
</dbReference>
<dbReference type="SUPFAM" id="SSF53720">
    <property type="entry name" value="ALDH-like"/>
    <property type="match status" value="1"/>
</dbReference>
<dbReference type="PROSITE" id="PS00070">
    <property type="entry name" value="ALDEHYDE_DEHYDR_CYS"/>
    <property type="match status" value="1"/>
</dbReference>
<dbReference type="PROSITE" id="PS00687">
    <property type="entry name" value="ALDEHYDE_DEHYDR_GLU"/>
    <property type="match status" value="1"/>
</dbReference>
<evidence type="ECO:0000250" key="1">
    <source>
        <dbReference type="UniProtKB" id="P25526"/>
    </source>
</evidence>
<evidence type="ECO:0000305" key="2"/>
<name>ALDH_STAAC</name>